<protein>
    <recommendedName>
        <fullName evidence="1">Putative pre-16S rRNA nuclease</fullName>
        <ecNumber evidence="1">3.1.-.-</ecNumber>
    </recommendedName>
</protein>
<name>YQGF_STAAR</name>
<proteinExistence type="inferred from homology"/>
<organism>
    <name type="scientific">Staphylococcus aureus (strain MRSA252)</name>
    <dbReference type="NCBI Taxonomy" id="282458"/>
    <lineage>
        <taxon>Bacteria</taxon>
        <taxon>Bacillati</taxon>
        <taxon>Bacillota</taxon>
        <taxon>Bacilli</taxon>
        <taxon>Bacillales</taxon>
        <taxon>Staphylococcaceae</taxon>
        <taxon>Staphylococcus</taxon>
    </lineage>
</organism>
<evidence type="ECO:0000255" key="1">
    <source>
        <dbReference type="HAMAP-Rule" id="MF_00651"/>
    </source>
</evidence>
<feature type="chain" id="PRO_0000172140" description="Putative pre-16S rRNA nuclease">
    <location>
        <begin position="1"/>
        <end position="142"/>
    </location>
</feature>
<keyword id="KW-0963">Cytoplasm</keyword>
<keyword id="KW-0378">Hydrolase</keyword>
<keyword id="KW-0540">Nuclease</keyword>
<keyword id="KW-0690">Ribosome biogenesis</keyword>
<gene>
    <name type="ordered locus">SAR1695</name>
</gene>
<comment type="function">
    <text evidence="1">Could be a nuclease involved in processing of the 5'-end of pre-16S rRNA.</text>
</comment>
<comment type="subcellular location">
    <subcellularLocation>
        <location evidence="1">Cytoplasm</location>
    </subcellularLocation>
</comment>
<comment type="similarity">
    <text evidence="1">Belongs to the YqgF nuclease family.</text>
</comment>
<reference key="1">
    <citation type="journal article" date="2004" name="Proc. Natl. Acad. Sci. U.S.A.">
        <title>Complete genomes of two clinical Staphylococcus aureus strains: evidence for the rapid evolution of virulence and drug resistance.</title>
        <authorList>
            <person name="Holden M.T.G."/>
            <person name="Feil E.J."/>
            <person name="Lindsay J.A."/>
            <person name="Peacock S.J."/>
            <person name="Day N.P.J."/>
            <person name="Enright M.C."/>
            <person name="Foster T.J."/>
            <person name="Moore C.E."/>
            <person name="Hurst L."/>
            <person name="Atkin R."/>
            <person name="Barron A."/>
            <person name="Bason N."/>
            <person name="Bentley S.D."/>
            <person name="Chillingworth C."/>
            <person name="Chillingworth T."/>
            <person name="Churcher C."/>
            <person name="Clark L."/>
            <person name="Corton C."/>
            <person name="Cronin A."/>
            <person name="Doggett J."/>
            <person name="Dowd L."/>
            <person name="Feltwell T."/>
            <person name="Hance Z."/>
            <person name="Harris B."/>
            <person name="Hauser H."/>
            <person name="Holroyd S."/>
            <person name="Jagels K."/>
            <person name="James K.D."/>
            <person name="Lennard N."/>
            <person name="Line A."/>
            <person name="Mayes R."/>
            <person name="Moule S."/>
            <person name="Mungall K."/>
            <person name="Ormond D."/>
            <person name="Quail M.A."/>
            <person name="Rabbinowitsch E."/>
            <person name="Rutherford K.M."/>
            <person name="Sanders M."/>
            <person name="Sharp S."/>
            <person name="Simmonds M."/>
            <person name="Stevens K."/>
            <person name="Whitehead S."/>
            <person name="Barrell B.G."/>
            <person name="Spratt B.G."/>
            <person name="Parkhill J."/>
        </authorList>
    </citation>
    <scope>NUCLEOTIDE SEQUENCE [LARGE SCALE GENOMIC DNA]</scope>
    <source>
        <strain>MRSA252</strain>
    </source>
</reference>
<accession>Q6GG87</accession>
<sequence length="142" mass="15865">MLQHKILGLDVGSRTVGIAISDIMGWTAQGLDTLRINEENNELGIDQLVDIIKKHNVGTVVIGLPKNMNNSIGFRGEASLTYKEKLLEAYPSIEIVMWDERLSTMAAERSLLEADVSRQKRKQVIDKMAAVFILQGYLDSLH</sequence>
<dbReference type="EC" id="3.1.-.-" evidence="1"/>
<dbReference type="EMBL" id="BX571856">
    <property type="protein sequence ID" value="CAG40687.1"/>
    <property type="molecule type" value="Genomic_DNA"/>
</dbReference>
<dbReference type="SMR" id="Q6GG87"/>
<dbReference type="KEGG" id="sar:SAR1695"/>
<dbReference type="HOGENOM" id="CLU_098240_2_0_9"/>
<dbReference type="Proteomes" id="UP000000596">
    <property type="component" value="Chromosome"/>
</dbReference>
<dbReference type="GO" id="GO:0005829">
    <property type="term" value="C:cytosol"/>
    <property type="evidence" value="ECO:0007669"/>
    <property type="project" value="TreeGrafter"/>
</dbReference>
<dbReference type="GO" id="GO:0004518">
    <property type="term" value="F:nuclease activity"/>
    <property type="evidence" value="ECO:0007669"/>
    <property type="project" value="UniProtKB-KW"/>
</dbReference>
<dbReference type="GO" id="GO:0000967">
    <property type="term" value="P:rRNA 5'-end processing"/>
    <property type="evidence" value="ECO:0007669"/>
    <property type="project" value="UniProtKB-UniRule"/>
</dbReference>
<dbReference type="CDD" id="cd16964">
    <property type="entry name" value="YqgF"/>
    <property type="match status" value="1"/>
</dbReference>
<dbReference type="FunFam" id="3.30.420.140:FF:000003">
    <property type="entry name" value="Putative pre-16S rRNA nuclease"/>
    <property type="match status" value="1"/>
</dbReference>
<dbReference type="Gene3D" id="3.30.420.140">
    <property type="entry name" value="YqgF/RNase H-like domain"/>
    <property type="match status" value="1"/>
</dbReference>
<dbReference type="HAMAP" id="MF_00651">
    <property type="entry name" value="Nuclease_YqgF"/>
    <property type="match status" value="1"/>
</dbReference>
<dbReference type="InterPro" id="IPR012337">
    <property type="entry name" value="RNaseH-like_sf"/>
</dbReference>
<dbReference type="InterPro" id="IPR005227">
    <property type="entry name" value="YqgF"/>
</dbReference>
<dbReference type="InterPro" id="IPR006641">
    <property type="entry name" value="YqgF/RNaseH-like_dom"/>
</dbReference>
<dbReference type="InterPro" id="IPR037027">
    <property type="entry name" value="YqgF/RNaseH-like_dom_sf"/>
</dbReference>
<dbReference type="NCBIfam" id="TIGR00250">
    <property type="entry name" value="RNAse_H_YqgF"/>
    <property type="match status" value="1"/>
</dbReference>
<dbReference type="PANTHER" id="PTHR33317">
    <property type="entry name" value="POLYNUCLEOTIDYL TRANSFERASE, RIBONUCLEASE H-LIKE SUPERFAMILY PROTEIN"/>
    <property type="match status" value="1"/>
</dbReference>
<dbReference type="PANTHER" id="PTHR33317:SF4">
    <property type="entry name" value="POLYNUCLEOTIDYL TRANSFERASE, RIBONUCLEASE H-LIKE SUPERFAMILY PROTEIN"/>
    <property type="match status" value="1"/>
</dbReference>
<dbReference type="Pfam" id="PF03652">
    <property type="entry name" value="RuvX"/>
    <property type="match status" value="1"/>
</dbReference>
<dbReference type="SMART" id="SM00732">
    <property type="entry name" value="YqgFc"/>
    <property type="match status" value="1"/>
</dbReference>
<dbReference type="SUPFAM" id="SSF53098">
    <property type="entry name" value="Ribonuclease H-like"/>
    <property type="match status" value="1"/>
</dbReference>